<comment type="subunit">
    <text evidence="3">Interacts with pakB.</text>
</comment>
<comment type="subcellular location">
    <subcellularLocation>
        <location evidence="4">Cell membrane</location>
        <topology evidence="4">Lipid-anchor</topology>
        <orientation evidence="4">Cytoplasmic side</orientation>
    </subcellularLocation>
</comment>
<comment type="similarity">
    <text evidence="4">Belongs to the small GTPase superfamily. Rho family.</text>
</comment>
<dbReference type="EMBL" id="L11593">
    <property type="protein sequence ID" value="AAC37389.1"/>
    <property type="molecule type" value="mRNA"/>
</dbReference>
<dbReference type="EMBL" id="AF310888">
    <property type="protein sequence ID" value="AAG45118.1"/>
    <property type="molecule type" value="Genomic_DNA"/>
</dbReference>
<dbReference type="EMBL" id="AAFI02000218">
    <property type="protein sequence ID" value="EAL60575.1"/>
    <property type="molecule type" value="Genomic_DNA"/>
</dbReference>
<dbReference type="RefSeq" id="XP_628990.1">
    <property type="nucleotide sequence ID" value="XM_628988.1"/>
</dbReference>
<dbReference type="SMR" id="P34149"/>
<dbReference type="FunCoup" id="P34149">
    <property type="interactions" value="13"/>
</dbReference>
<dbReference type="IntAct" id="P34149">
    <property type="interactions" value="2"/>
</dbReference>
<dbReference type="STRING" id="44689.P34149"/>
<dbReference type="PaxDb" id="44689-DDB0201659"/>
<dbReference type="EnsemblProtists" id="EAL60575">
    <property type="protein sequence ID" value="EAL60575"/>
    <property type="gene ID" value="DDB_G0293526"/>
</dbReference>
<dbReference type="GeneID" id="8629273"/>
<dbReference type="KEGG" id="ddi:DDB_G0293526"/>
<dbReference type="dictyBase" id="DDB_G0293526">
    <property type="gene designation" value="racC"/>
</dbReference>
<dbReference type="VEuPathDB" id="AmoebaDB:DDB_G0293526"/>
<dbReference type="eggNOG" id="KOG0393">
    <property type="taxonomic scope" value="Eukaryota"/>
</dbReference>
<dbReference type="HOGENOM" id="CLU_041217_21_2_1"/>
<dbReference type="InParanoid" id="P34149"/>
<dbReference type="OMA" id="ENVYTKW"/>
<dbReference type="PhylomeDB" id="P34149"/>
<dbReference type="Reactome" id="R-DDI-6798695">
    <property type="pathway name" value="Neutrophil degranulation"/>
</dbReference>
<dbReference type="Reactome" id="R-DDI-9013404">
    <property type="pathway name" value="RAC2 GTPase cycle"/>
</dbReference>
<dbReference type="Reactome" id="R-DDI-9013407">
    <property type="pathway name" value="RHOH GTPase cycle"/>
</dbReference>
<dbReference type="Reactome" id="R-DDI-9013408">
    <property type="pathway name" value="RHOG GTPase cycle"/>
</dbReference>
<dbReference type="Reactome" id="R-DDI-9013418">
    <property type="pathway name" value="RHOBTB2 GTPase cycle"/>
</dbReference>
<dbReference type="Reactome" id="R-DDI-9013422">
    <property type="pathway name" value="RHOBTB1 GTPase cycle"/>
</dbReference>
<dbReference type="PRO" id="PR:P34149"/>
<dbReference type="Proteomes" id="UP000002195">
    <property type="component" value="Chromosome 6"/>
</dbReference>
<dbReference type="GO" id="GO:0031252">
    <property type="term" value="C:cell leading edge"/>
    <property type="evidence" value="ECO:0000314"/>
    <property type="project" value="dictyBase"/>
</dbReference>
<dbReference type="GO" id="GO:0042995">
    <property type="term" value="C:cell projection"/>
    <property type="evidence" value="ECO:0000318"/>
    <property type="project" value="GO_Central"/>
</dbReference>
<dbReference type="GO" id="GO:0031410">
    <property type="term" value="C:cytoplasmic vesicle"/>
    <property type="evidence" value="ECO:0000314"/>
    <property type="project" value="dictyBase"/>
</dbReference>
<dbReference type="GO" id="GO:0005856">
    <property type="term" value="C:cytoskeleton"/>
    <property type="evidence" value="ECO:0000318"/>
    <property type="project" value="GO_Central"/>
</dbReference>
<dbReference type="GO" id="GO:0005829">
    <property type="term" value="C:cytosol"/>
    <property type="evidence" value="ECO:0000314"/>
    <property type="project" value="dictyBase"/>
</dbReference>
<dbReference type="GO" id="GO:0005886">
    <property type="term" value="C:plasma membrane"/>
    <property type="evidence" value="ECO:0000314"/>
    <property type="project" value="dictyBase"/>
</dbReference>
<dbReference type="GO" id="GO:0005525">
    <property type="term" value="F:GTP binding"/>
    <property type="evidence" value="ECO:0000318"/>
    <property type="project" value="GO_Central"/>
</dbReference>
<dbReference type="GO" id="GO:0003924">
    <property type="term" value="F:GTPase activity"/>
    <property type="evidence" value="ECO:0000318"/>
    <property type="project" value="GO_Central"/>
</dbReference>
<dbReference type="GO" id="GO:0019904">
    <property type="term" value="F:protein domain specific binding"/>
    <property type="evidence" value="ECO:0000314"/>
    <property type="project" value="dictyBase"/>
</dbReference>
<dbReference type="GO" id="GO:0019901">
    <property type="term" value="F:protein kinase binding"/>
    <property type="evidence" value="ECO:0000353"/>
    <property type="project" value="dictyBase"/>
</dbReference>
<dbReference type="GO" id="GO:0007015">
    <property type="term" value="P:actin filament organization"/>
    <property type="evidence" value="ECO:0000318"/>
    <property type="project" value="GO_Central"/>
</dbReference>
<dbReference type="GO" id="GO:0016477">
    <property type="term" value="P:cell migration"/>
    <property type="evidence" value="ECO:0000315"/>
    <property type="project" value="dictyBase"/>
</dbReference>
<dbReference type="GO" id="GO:0006935">
    <property type="term" value="P:chemotaxis"/>
    <property type="evidence" value="ECO:0000315"/>
    <property type="project" value="dictyBase"/>
</dbReference>
<dbReference type="GO" id="GO:0030865">
    <property type="term" value="P:cortical cytoskeleton organization"/>
    <property type="evidence" value="ECO:0000318"/>
    <property type="project" value="GO_Central"/>
</dbReference>
<dbReference type="GO" id="GO:0045184">
    <property type="term" value="P:establishment of protein localization"/>
    <property type="evidence" value="ECO:0000315"/>
    <property type="project" value="dictyBase"/>
</dbReference>
<dbReference type="GO" id="GO:0007163">
    <property type="term" value="P:establishment or maintenance of cell polarity"/>
    <property type="evidence" value="ECO:0000318"/>
    <property type="project" value="GO_Central"/>
</dbReference>
<dbReference type="GO" id="GO:0140986">
    <property type="term" value="P:G protein-coupled chemorepellent receptor signaling pathway"/>
    <property type="evidence" value="ECO:0000315"/>
    <property type="project" value="dictyBase"/>
</dbReference>
<dbReference type="GO" id="GO:0000281">
    <property type="term" value="P:mitotic cytokinesis"/>
    <property type="evidence" value="ECO:0000315"/>
    <property type="project" value="dictyBase"/>
</dbReference>
<dbReference type="GO" id="GO:0043491">
    <property type="term" value="P:phosphatidylinositol 3-kinase/protein kinase B signal transduction"/>
    <property type="evidence" value="ECO:0000315"/>
    <property type="project" value="dictyBase"/>
</dbReference>
<dbReference type="GO" id="GO:0030838">
    <property type="term" value="P:positive regulation of actin filament polymerization"/>
    <property type="evidence" value="ECO:0000314"/>
    <property type="project" value="dictyBase"/>
</dbReference>
<dbReference type="GO" id="GO:1901610">
    <property type="term" value="P:positive regulation of vesicle transport along microtubule"/>
    <property type="evidence" value="ECO:0000315"/>
    <property type="project" value="dictyBase"/>
</dbReference>
<dbReference type="GO" id="GO:0032956">
    <property type="term" value="P:regulation of actin cytoskeleton organization"/>
    <property type="evidence" value="ECO:0000318"/>
    <property type="project" value="GO_Central"/>
</dbReference>
<dbReference type="GO" id="GO:0008360">
    <property type="term" value="P:regulation of cell shape"/>
    <property type="evidence" value="ECO:0000318"/>
    <property type="project" value="GO_Central"/>
</dbReference>
<dbReference type="GO" id="GO:0007165">
    <property type="term" value="P:signal transduction"/>
    <property type="evidence" value="ECO:0000318"/>
    <property type="project" value="GO_Central"/>
</dbReference>
<dbReference type="GO" id="GO:0007264">
    <property type="term" value="P:small GTPase-mediated signal transduction"/>
    <property type="evidence" value="ECO:0007669"/>
    <property type="project" value="InterPro"/>
</dbReference>
<dbReference type="GO" id="GO:0047496">
    <property type="term" value="P:vesicle transport along microtubule"/>
    <property type="evidence" value="ECO:0000315"/>
    <property type="project" value="dictyBase"/>
</dbReference>
<dbReference type="CDD" id="cd00157">
    <property type="entry name" value="Rho"/>
    <property type="match status" value="1"/>
</dbReference>
<dbReference type="FunFam" id="3.40.50.300:FF:000118">
    <property type="entry name" value="Rho-related GTP-binding protein RhoG"/>
    <property type="match status" value="1"/>
</dbReference>
<dbReference type="Gene3D" id="3.40.50.300">
    <property type="entry name" value="P-loop containing nucleotide triphosphate hydrolases"/>
    <property type="match status" value="1"/>
</dbReference>
<dbReference type="InterPro" id="IPR027417">
    <property type="entry name" value="P-loop_NTPase"/>
</dbReference>
<dbReference type="InterPro" id="IPR005225">
    <property type="entry name" value="Small_GTP-bd"/>
</dbReference>
<dbReference type="InterPro" id="IPR001806">
    <property type="entry name" value="Small_GTPase"/>
</dbReference>
<dbReference type="InterPro" id="IPR003578">
    <property type="entry name" value="Small_GTPase_Rho"/>
</dbReference>
<dbReference type="NCBIfam" id="TIGR00231">
    <property type="entry name" value="small_GTP"/>
    <property type="match status" value="1"/>
</dbReference>
<dbReference type="PANTHER" id="PTHR24072">
    <property type="entry name" value="RHO FAMILY GTPASE"/>
    <property type="match status" value="1"/>
</dbReference>
<dbReference type="Pfam" id="PF00071">
    <property type="entry name" value="Ras"/>
    <property type="match status" value="1"/>
</dbReference>
<dbReference type="PRINTS" id="PR00449">
    <property type="entry name" value="RASTRNSFRMNG"/>
</dbReference>
<dbReference type="SMART" id="SM00175">
    <property type="entry name" value="RAB"/>
    <property type="match status" value="1"/>
</dbReference>
<dbReference type="SMART" id="SM00173">
    <property type="entry name" value="RAS"/>
    <property type="match status" value="1"/>
</dbReference>
<dbReference type="SMART" id="SM00174">
    <property type="entry name" value="RHO"/>
    <property type="match status" value="1"/>
</dbReference>
<dbReference type="SUPFAM" id="SSF52540">
    <property type="entry name" value="P-loop containing nucleoside triphosphate hydrolases"/>
    <property type="match status" value="1"/>
</dbReference>
<dbReference type="PROSITE" id="PS51420">
    <property type="entry name" value="RHO"/>
    <property type="match status" value="1"/>
</dbReference>
<feature type="chain" id="PRO_0000198900" description="Rho-related protein racC">
    <location>
        <begin position="1"/>
        <end position="189"/>
    </location>
</feature>
<feature type="propeptide" id="PRO_0000281250" description="Removed in mature form" evidence="1">
    <location>
        <begin position="190"/>
        <end position="192"/>
    </location>
</feature>
<feature type="short sequence motif" description="Effector region" evidence="2">
    <location>
        <begin position="35"/>
        <end position="43"/>
    </location>
</feature>
<feature type="binding site" evidence="1">
    <location>
        <begin position="13"/>
        <end position="20"/>
    </location>
    <ligand>
        <name>GTP</name>
        <dbReference type="ChEBI" id="CHEBI:37565"/>
    </ligand>
</feature>
<feature type="binding site" evidence="1">
    <location>
        <begin position="60"/>
        <end position="64"/>
    </location>
    <ligand>
        <name>GTP</name>
        <dbReference type="ChEBI" id="CHEBI:37565"/>
    </ligand>
</feature>
<feature type="binding site" evidence="1">
    <location>
        <begin position="118"/>
        <end position="121"/>
    </location>
    <ligand>
        <name>GTP</name>
        <dbReference type="ChEBI" id="CHEBI:37565"/>
    </ligand>
</feature>
<feature type="modified residue" description="Cysteine methyl ester" evidence="1">
    <location>
        <position position="189"/>
    </location>
</feature>
<feature type="lipid moiety-binding region" description="S-geranylgeranyl cysteine" evidence="1">
    <location>
        <position position="189"/>
    </location>
</feature>
<protein>
    <recommendedName>
        <fullName>Rho-related protein racC</fullName>
    </recommendedName>
</protein>
<keyword id="KW-1003">Cell membrane</keyword>
<keyword id="KW-0342">GTP-binding</keyword>
<keyword id="KW-0449">Lipoprotein</keyword>
<keyword id="KW-0472">Membrane</keyword>
<keyword id="KW-0488">Methylation</keyword>
<keyword id="KW-0547">Nucleotide-binding</keyword>
<keyword id="KW-0636">Prenylation</keyword>
<keyword id="KW-1185">Reference proteome</keyword>
<accession>P34149</accession>
<accession>Q54BN9</accession>
<proteinExistence type="evidence at protein level"/>
<gene>
    <name type="primary">racC</name>
    <name type="ORF">DDB_G0293526</name>
</gene>
<evidence type="ECO:0000250" key="1"/>
<evidence type="ECO:0000255" key="2"/>
<evidence type="ECO:0000269" key="3">
    <source>
    </source>
</evidence>
<evidence type="ECO:0000305" key="4"/>
<organism>
    <name type="scientific">Dictyostelium discoideum</name>
    <name type="common">Social amoeba</name>
    <dbReference type="NCBI Taxonomy" id="44689"/>
    <lineage>
        <taxon>Eukaryota</taxon>
        <taxon>Amoebozoa</taxon>
        <taxon>Evosea</taxon>
        <taxon>Eumycetozoa</taxon>
        <taxon>Dictyostelia</taxon>
        <taxon>Dictyosteliales</taxon>
        <taxon>Dictyosteliaceae</taxon>
        <taxon>Dictyostelium</taxon>
    </lineage>
</organism>
<reference key="1">
    <citation type="journal article" date="1993" name="Gene">
        <title>Cloning and characterization of seven novel Dictyostelium discoideum rac-related genes belonging to the rho family of GTPases.</title>
        <authorList>
            <person name="Bush J.M. IV"/>
            <person name="Franek K."/>
            <person name="Cardelli J.A."/>
        </authorList>
    </citation>
    <scope>NUCLEOTIDE SEQUENCE [MRNA]</scope>
    <source>
        <strain>AX3</strain>
    </source>
</reference>
<reference key="2">
    <citation type="journal article" date="2001" name="Nucleic Acids Res.">
        <title>The Dictyostelium discoideum family of Rho-related proteins.</title>
        <authorList>
            <person name="Rivero F."/>
            <person name="Dislich H."/>
            <person name="Gloeckner G."/>
            <person name="Noegel A.A."/>
        </authorList>
    </citation>
    <scope>NUCLEOTIDE SEQUENCE [GENOMIC DNA]</scope>
    <source>
        <strain>AX4</strain>
    </source>
</reference>
<reference key="3">
    <citation type="journal article" date="2005" name="Nature">
        <title>The genome of the social amoeba Dictyostelium discoideum.</title>
        <authorList>
            <person name="Eichinger L."/>
            <person name="Pachebat J.A."/>
            <person name="Gloeckner G."/>
            <person name="Rajandream M.A."/>
            <person name="Sucgang R."/>
            <person name="Berriman M."/>
            <person name="Song J."/>
            <person name="Olsen R."/>
            <person name="Szafranski K."/>
            <person name="Xu Q."/>
            <person name="Tunggal B."/>
            <person name="Kummerfeld S."/>
            <person name="Madera M."/>
            <person name="Konfortov B.A."/>
            <person name="Rivero F."/>
            <person name="Bankier A.T."/>
            <person name="Lehmann R."/>
            <person name="Hamlin N."/>
            <person name="Davies R."/>
            <person name="Gaudet P."/>
            <person name="Fey P."/>
            <person name="Pilcher K."/>
            <person name="Chen G."/>
            <person name="Saunders D."/>
            <person name="Sodergren E.J."/>
            <person name="Davis P."/>
            <person name="Kerhornou A."/>
            <person name="Nie X."/>
            <person name="Hall N."/>
            <person name="Anjard C."/>
            <person name="Hemphill L."/>
            <person name="Bason N."/>
            <person name="Farbrother P."/>
            <person name="Desany B."/>
            <person name="Just E."/>
            <person name="Morio T."/>
            <person name="Rost R."/>
            <person name="Churcher C.M."/>
            <person name="Cooper J."/>
            <person name="Haydock S."/>
            <person name="van Driessche N."/>
            <person name="Cronin A."/>
            <person name="Goodhead I."/>
            <person name="Muzny D.M."/>
            <person name="Mourier T."/>
            <person name="Pain A."/>
            <person name="Lu M."/>
            <person name="Harper D."/>
            <person name="Lindsay R."/>
            <person name="Hauser H."/>
            <person name="James K.D."/>
            <person name="Quiles M."/>
            <person name="Madan Babu M."/>
            <person name="Saito T."/>
            <person name="Buchrieser C."/>
            <person name="Wardroper A."/>
            <person name="Felder M."/>
            <person name="Thangavelu M."/>
            <person name="Johnson D."/>
            <person name="Knights A."/>
            <person name="Loulseged H."/>
            <person name="Mungall K.L."/>
            <person name="Oliver K."/>
            <person name="Price C."/>
            <person name="Quail M.A."/>
            <person name="Urushihara H."/>
            <person name="Hernandez J."/>
            <person name="Rabbinowitsch E."/>
            <person name="Steffen D."/>
            <person name="Sanders M."/>
            <person name="Ma J."/>
            <person name="Kohara Y."/>
            <person name="Sharp S."/>
            <person name="Simmonds M.N."/>
            <person name="Spiegler S."/>
            <person name="Tivey A."/>
            <person name="Sugano S."/>
            <person name="White B."/>
            <person name="Walker D."/>
            <person name="Woodward J.R."/>
            <person name="Winckler T."/>
            <person name="Tanaka Y."/>
            <person name="Shaulsky G."/>
            <person name="Schleicher M."/>
            <person name="Weinstock G.M."/>
            <person name="Rosenthal A."/>
            <person name="Cox E.C."/>
            <person name="Chisholm R.L."/>
            <person name="Gibbs R.A."/>
            <person name="Loomis W.F."/>
            <person name="Platzer M."/>
            <person name="Kay R.R."/>
            <person name="Williams J.G."/>
            <person name="Dear P.H."/>
            <person name="Noegel A.A."/>
            <person name="Barrell B.G."/>
            <person name="Kuspa A."/>
        </authorList>
    </citation>
    <scope>NUCLEOTIDE SEQUENCE [LARGE SCALE GENOMIC DNA]</scope>
    <source>
        <strain>AX4</strain>
    </source>
</reference>
<reference key="4">
    <citation type="journal article" date="2005" name="Mol. Biol. Cell">
        <title>Cellular distribution and functions of wild-type and constitutively activated Dictyostelium PakB.</title>
        <authorList>
            <person name="de la Roche M."/>
            <person name="Mahasneh A."/>
            <person name="Lee S.-F."/>
            <person name="Rivero F."/>
            <person name="Cote G.P."/>
        </authorList>
    </citation>
    <scope>INTERACTION WITH PAKB</scope>
</reference>
<name>RACC_DICDI</name>
<sequence length="192" mass="21691">MSAAEVIKLVVIGDGAVGKTCLLISYANNRFPEDYIPTVFDNYVVNLTAGDRNIELGLWDTAGQEEYDKLRPLSYANANVFLICFSITNPVSFENVYTKWYPEVMHFCPEVPQILVGTKLDTRDDRGVLDKLQQTGHKPITTEQGNDLARRIKAIKYMECSAKTSQNLKQVFDEAIKSVLFIKKKKSKCIVM</sequence>